<sequence>MSVEIESIEHELEESIASLRQAGVRITPQRQAILRYLISSHTHPTADEIYQALSPDFPNISVATIYNNLRVFKDIGIVKELTYGDSSSRFDFNTHNHYHIICEQCGKIVDFQYPQLNEIERLAQHMTDFDVTHHRMEIYGVCKECQDK</sequence>
<feature type="chain" id="PRO_0000289011" description="Peroxide-responsive repressor PerR">
    <location>
        <begin position="1"/>
        <end position="148"/>
    </location>
</feature>
<feature type="region of interest" description="DNA-binding" evidence="1">
    <location>
        <begin position="1"/>
        <end position="84"/>
    </location>
</feature>
<feature type="binding site" evidence="1">
    <location>
        <position position="102"/>
    </location>
    <ligand>
        <name>Zn(2+)</name>
        <dbReference type="ChEBI" id="CHEBI:29105"/>
    </ligand>
</feature>
<feature type="binding site" evidence="1">
    <location>
        <position position="105"/>
    </location>
    <ligand>
        <name>Zn(2+)</name>
        <dbReference type="ChEBI" id="CHEBI:29105"/>
    </ligand>
</feature>
<feature type="binding site" evidence="1">
    <location>
        <position position="142"/>
    </location>
    <ligand>
        <name>Zn(2+)</name>
        <dbReference type="ChEBI" id="CHEBI:29105"/>
    </ligand>
</feature>
<feature type="binding site" evidence="1">
    <location>
        <position position="145"/>
    </location>
    <ligand>
        <name>Zn(2+)</name>
        <dbReference type="ChEBI" id="CHEBI:29105"/>
    </ligand>
</feature>
<dbReference type="EMBL" id="CP000046">
    <property type="protein sequence ID" value="AAW36931.1"/>
    <property type="molecule type" value="Genomic_DNA"/>
</dbReference>
<dbReference type="RefSeq" id="WP_000110011.1">
    <property type="nucleotide sequence ID" value="NZ_JBGOFO010000006.1"/>
</dbReference>
<dbReference type="SMR" id="Q5HER3"/>
<dbReference type="GeneID" id="98346243"/>
<dbReference type="KEGG" id="sac:SACOL1919"/>
<dbReference type="HOGENOM" id="CLU_096072_4_2_9"/>
<dbReference type="Proteomes" id="UP000000530">
    <property type="component" value="Chromosome"/>
</dbReference>
<dbReference type="GO" id="GO:0005737">
    <property type="term" value="C:cytoplasm"/>
    <property type="evidence" value="ECO:0007669"/>
    <property type="project" value="UniProtKB-SubCell"/>
</dbReference>
<dbReference type="GO" id="GO:0003700">
    <property type="term" value="F:DNA-binding transcription factor activity"/>
    <property type="evidence" value="ECO:0007669"/>
    <property type="project" value="InterPro"/>
</dbReference>
<dbReference type="GO" id="GO:0000976">
    <property type="term" value="F:transcription cis-regulatory region binding"/>
    <property type="evidence" value="ECO:0007669"/>
    <property type="project" value="TreeGrafter"/>
</dbReference>
<dbReference type="GO" id="GO:0008270">
    <property type="term" value="F:zinc ion binding"/>
    <property type="evidence" value="ECO:0007669"/>
    <property type="project" value="TreeGrafter"/>
</dbReference>
<dbReference type="GO" id="GO:0045892">
    <property type="term" value="P:negative regulation of DNA-templated transcription"/>
    <property type="evidence" value="ECO:0007669"/>
    <property type="project" value="TreeGrafter"/>
</dbReference>
<dbReference type="GO" id="GO:1900376">
    <property type="term" value="P:regulation of secondary metabolite biosynthetic process"/>
    <property type="evidence" value="ECO:0007669"/>
    <property type="project" value="TreeGrafter"/>
</dbReference>
<dbReference type="CDD" id="cd07153">
    <property type="entry name" value="Fur_like"/>
    <property type="match status" value="1"/>
</dbReference>
<dbReference type="FunFam" id="1.10.10.10:FF:000147">
    <property type="entry name" value="Fur family transcriptional regulator"/>
    <property type="match status" value="1"/>
</dbReference>
<dbReference type="FunFam" id="3.30.1490.190:FF:000003">
    <property type="entry name" value="Fur family transcriptional regulator"/>
    <property type="match status" value="1"/>
</dbReference>
<dbReference type="Gene3D" id="3.30.1490.190">
    <property type="match status" value="1"/>
</dbReference>
<dbReference type="Gene3D" id="1.10.10.10">
    <property type="entry name" value="Winged helix-like DNA-binding domain superfamily/Winged helix DNA-binding domain"/>
    <property type="match status" value="1"/>
</dbReference>
<dbReference type="InterPro" id="IPR002481">
    <property type="entry name" value="FUR"/>
</dbReference>
<dbReference type="InterPro" id="IPR043135">
    <property type="entry name" value="Fur_C"/>
</dbReference>
<dbReference type="InterPro" id="IPR036388">
    <property type="entry name" value="WH-like_DNA-bd_sf"/>
</dbReference>
<dbReference type="InterPro" id="IPR036390">
    <property type="entry name" value="WH_DNA-bd_sf"/>
</dbReference>
<dbReference type="PANTHER" id="PTHR33202:SF8">
    <property type="entry name" value="PEROXIDE-RESPONSIVE REPRESSOR PERR"/>
    <property type="match status" value="1"/>
</dbReference>
<dbReference type="PANTHER" id="PTHR33202">
    <property type="entry name" value="ZINC UPTAKE REGULATION PROTEIN"/>
    <property type="match status" value="1"/>
</dbReference>
<dbReference type="Pfam" id="PF01475">
    <property type="entry name" value="FUR"/>
    <property type="match status" value="1"/>
</dbReference>
<dbReference type="SUPFAM" id="SSF46785">
    <property type="entry name" value="Winged helix' DNA-binding domain"/>
    <property type="match status" value="1"/>
</dbReference>
<keyword id="KW-0963">Cytoplasm</keyword>
<keyword id="KW-0238">DNA-binding</keyword>
<keyword id="KW-0464">Manganese</keyword>
<keyword id="KW-0479">Metal-binding</keyword>
<keyword id="KW-0678">Repressor</keyword>
<keyword id="KW-0804">Transcription</keyword>
<keyword id="KW-0805">Transcription regulation</keyword>
<keyword id="KW-0862">Zinc</keyword>
<evidence type="ECO:0000250" key="1"/>
<evidence type="ECO:0000305" key="2"/>
<comment type="function">
    <text evidence="1">Manganese-dependent repressor that controls a regulon of oxidative stress resistance and iron-storage proteins. May act as a hydrogen peroxide and organic hydroperoxide sensor (By similarity).</text>
</comment>
<comment type="subcellular location">
    <subcellularLocation>
        <location evidence="1">Cytoplasm</location>
    </subcellularLocation>
</comment>
<comment type="similarity">
    <text evidence="2">Belongs to the Fur family.</text>
</comment>
<protein>
    <recommendedName>
        <fullName>Peroxide-responsive repressor PerR</fullName>
    </recommendedName>
</protein>
<proteinExistence type="inferred from homology"/>
<organism>
    <name type="scientific">Staphylococcus aureus (strain COL)</name>
    <dbReference type="NCBI Taxonomy" id="93062"/>
    <lineage>
        <taxon>Bacteria</taxon>
        <taxon>Bacillati</taxon>
        <taxon>Bacillota</taxon>
        <taxon>Bacilli</taxon>
        <taxon>Bacillales</taxon>
        <taxon>Staphylococcaceae</taxon>
        <taxon>Staphylococcus</taxon>
    </lineage>
</organism>
<name>PERR_STAAC</name>
<accession>Q5HER3</accession>
<reference key="1">
    <citation type="journal article" date="2005" name="J. Bacteriol.">
        <title>Insights on evolution of virulence and resistance from the complete genome analysis of an early methicillin-resistant Staphylococcus aureus strain and a biofilm-producing methicillin-resistant Staphylococcus epidermidis strain.</title>
        <authorList>
            <person name="Gill S.R."/>
            <person name="Fouts D.E."/>
            <person name="Archer G.L."/>
            <person name="Mongodin E.F."/>
            <person name="DeBoy R.T."/>
            <person name="Ravel J."/>
            <person name="Paulsen I.T."/>
            <person name="Kolonay J.F."/>
            <person name="Brinkac L.M."/>
            <person name="Beanan M.J."/>
            <person name="Dodson R.J."/>
            <person name="Daugherty S.C."/>
            <person name="Madupu R."/>
            <person name="Angiuoli S.V."/>
            <person name="Durkin A.S."/>
            <person name="Haft D.H."/>
            <person name="Vamathevan J.J."/>
            <person name="Khouri H."/>
            <person name="Utterback T.R."/>
            <person name="Lee C."/>
            <person name="Dimitrov G."/>
            <person name="Jiang L."/>
            <person name="Qin H."/>
            <person name="Weidman J."/>
            <person name="Tran K."/>
            <person name="Kang K.H."/>
            <person name="Hance I.R."/>
            <person name="Nelson K.E."/>
            <person name="Fraser C.M."/>
        </authorList>
    </citation>
    <scope>NUCLEOTIDE SEQUENCE [LARGE SCALE GENOMIC DNA]</scope>
    <source>
        <strain>COL</strain>
    </source>
</reference>
<gene>
    <name type="primary">perR</name>
    <name type="ordered locus">SACOL1919</name>
</gene>